<comment type="function">
    <text evidence="1">Catalyzes the reversible conversion of ribose-5-phosphate to ribulose 5-phosphate.</text>
</comment>
<comment type="catalytic activity">
    <reaction evidence="1">
        <text>aldehydo-D-ribose 5-phosphate = D-ribulose 5-phosphate</text>
        <dbReference type="Rhea" id="RHEA:14657"/>
        <dbReference type="ChEBI" id="CHEBI:58121"/>
        <dbReference type="ChEBI" id="CHEBI:58273"/>
        <dbReference type="EC" id="5.3.1.6"/>
    </reaction>
</comment>
<comment type="pathway">
    <text evidence="1">Carbohydrate degradation; pentose phosphate pathway; D-ribose 5-phosphate from D-ribulose 5-phosphate (non-oxidative stage): step 1/1.</text>
</comment>
<comment type="subunit">
    <text evidence="1">Homodimer.</text>
</comment>
<comment type="similarity">
    <text evidence="1">Belongs to the ribose 5-phosphate isomerase family.</text>
</comment>
<feature type="chain" id="PRO_1000194724" description="Ribose-5-phosphate isomerase A">
    <location>
        <begin position="1"/>
        <end position="227"/>
    </location>
</feature>
<feature type="active site" description="Proton acceptor" evidence="1">
    <location>
        <position position="104"/>
    </location>
</feature>
<feature type="binding site" evidence="1">
    <location>
        <begin position="26"/>
        <end position="29"/>
    </location>
    <ligand>
        <name>substrate</name>
    </ligand>
</feature>
<feature type="binding site" evidence="1">
    <location>
        <begin position="82"/>
        <end position="85"/>
    </location>
    <ligand>
        <name>substrate</name>
    </ligand>
</feature>
<feature type="binding site" evidence="1">
    <location>
        <begin position="95"/>
        <end position="98"/>
    </location>
    <ligand>
        <name>substrate</name>
    </ligand>
</feature>
<feature type="binding site" evidence="1">
    <location>
        <position position="122"/>
    </location>
    <ligand>
        <name>substrate</name>
    </ligand>
</feature>
<gene>
    <name evidence="1" type="primary">rpiA</name>
    <name type="ordered locus">SPN23F07490</name>
</gene>
<accession>B8ZNH8</accession>
<organism>
    <name type="scientific">Streptococcus pneumoniae (strain ATCC 700669 / Spain 23F-1)</name>
    <dbReference type="NCBI Taxonomy" id="561276"/>
    <lineage>
        <taxon>Bacteria</taxon>
        <taxon>Bacillati</taxon>
        <taxon>Bacillota</taxon>
        <taxon>Bacilli</taxon>
        <taxon>Lactobacillales</taxon>
        <taxon>Streptococcaceae</taxon>
        <taxon>Streptococcus</taxon>
    </lineage>
</organism>
<keyword id="KW-0413">Isomerase</keyword>
<name>RPIA_STRPJ</name>
<protein>
    <recommendedName>
        <fullName evidence="1">Ribose-5-phosphate isomerase A</fullName>
        <ecNumber evidence="1">5.3.1.6</ecNumber>
    </recommendedName>
    <alternativeName>
        <fullName evidence="1">Phosphoriboisomerase A</fullName>
        <shortName evidence="1">PRI</shortName>
    </alternativeName>
</protein>
<dbReference type="EC" id="5.3.1.6" evidence="1"/>
<dbReference type="EMBL" id="FM211187">
    <property type="protein sequence ID" value="CAR68592.1"/>
    <property type="molecule type" value="Genomic_DNA"/>
</dbReference>
<dbReference type="RefSeq" id="WP_000429260.1">
    <property type="nucleotide sequence ID" value="NC_011900.1"/>
</dbReference>
<dbReference type="SMR" id="B8ZNH8"/>
<dbReference type="KEGG" id="sne:SPN23F07490"/>
<dbReference type="HOGENOM" id="CLU_056590_1_0_9"/>
<dbReference type="UniPathway" id="UPA00115">
    <property type="reaction ID" value="UER00412"/>
</dbReference>
<dbReference type="GO" id="GO:0004751">
    <property type="term" value="F:ribose-5-phosphate isomerase activity"/>
    <property type="evidence" value="ECO:0007669"/>
    <property type="project" value="UniProtKB-UniRule"/>
</dbReference>
<dbReference type="GO" id="GO:0009052">
    <property type="term" value="P:pentose-phosphate shunt, non-oxidative branch"/>
    <property type="evidence" value="ECO:0007669"/>
    <property type="project" value="UniProtKB-UniRule"/>
</dbReference>
<dbReference type="CDD" id="cd01398">
    <property type="entry name" value="RPI_A"/>
    <property type="match status" value="1"/>
</dbReference>
<dbReference type="FunFam" id="3.40.50.1360:FF:000001">
    <property type="entry name" value="Ribose-5-phosphate isomerase A"/>
    <property type="match status" value="1"/>
</dbReference>
<dbReference type="Gene3D" id="3.30.70.260">
    <property type="match status" value="1"/>
</dbReference>
<dbReference type="Gene3D" id="3.40.50.1360">
    <property type="match status" value="1"/>
</dbReference>
<dbReference type="HAMAP" id="MF_00170">
    <property type="entry name" value="Rib_5P_isom_A"/>
    <property type="match status" value="1"/>
</dbReference>
<dbReference type="InterPro" id="IPR037171">
    <property type="entry name" value="NagB/RpiA_transferase-like"/>
</dbReference>
<dbReference type="InterPro" id="IPR050262">
    <property type="entry name" value="Ribose-5P_isomerase"/>
</dbReference>
<dbReference type="InterPro" id="IPR020672">
    <property type="entry name" value="Ribose5P_isomerase_typA_subgr"/>
</dbReference>
<dbReference type="InterPro" id="IPR004788">
    <property type="entry name" value="Ribose5P_isomerase_type_A"/>
</dbReference>
<dbReference type="NCBIfam" id="NF001924">
    <property type="entry name" value="PRK00702.1"/>
    <property type="match status" value="1"/>
</dbReference>
<dbReference type="NCBIfam" id="TIGR00021">
    <property type="entry name" value="rpiA"/>
    <property type="match status" value="1"/>
</dbReference>
<dbReference type="PANTHER" id="PTHR43748">
    <property type="entry name" value="RIBOSE-5-PHOSPHATE ISOMERASE 3, CHLOROPLASTIC-RELATED"/>
    <property type="match status" value="1"/>
</dbReference>
<dbReference type="PANTHER" id="PTHR43748:SF3">
    <property type="entry name" value="RIBOSE-5-PHOSPHATE ISOMERASE 3, CHLOROPLASTIC-RELATED"/>
    <property type="match status" value="1"/>
</dbReference>
<dbReference type="Pfam" id="PF06026">
    <property type="entry name" value="Rib_5-P_isom_A"/>
    <property type="match status" value="1"/>
</dbReference>
<dbReference type="SUPFAM" id="SSF75445">
    <property type="entry name" value="D-ribose-5-phosphate isomerase (RpiA), lid domain"/>
    <property type="match status" value="1"/>
</dbReference>
<dbReference type="SUPFAM" id="SSF100950">
    <property type="entry name" value="NagB/RpiA/CoA transferase-like"/>
    <property type="match status" value="1"/>
</dbReference>
<proteinExistence type="inferred from homology"/>
<reference key="1">
    <citation type="journal article" date="2009" name="J. Bacteriol.">
        <title>Role of conjugative elements in the evolution of the multidrug-resistant pandemic clone Streptococcus pneumoniae Spain23F ST81.</title>
        <authorList>
            <person name="Croucher N.J."/>
            <person name="Walker D."/>
            <person name="Romero P."/>
            <person name="Lennard N."/>
            <person name="Paterson G.K."/>
            <person name="Bason N.C."/>
            <person name="Mitchell A.M."/>
            <person name="Quail M.A."/>
            <person name="Andrew P.W."/>
            <person name="Parkhill J."/>
            <person name="Bentley S.D."/>
            <person name="Mitchell T.J."/>
        </authorList>
    </citation>
    <scope>NUCLEOTIDE SEQUENCE [LARGE SCALE GENOMIC DNA]</scope>
    <source>
        <strain>ATCC 700669 / Spain 23F-1</strain>
    </source>
</reference>
<sequence>MENLKKMAGIKAAEFVKDGMVVGLGTGSTAYYFVEEIGRRIKEEGLQIIAVTTSSVTTKQAEGLNIPLKSIDQVDFVDVTVDGADEVDSQFNGIKGGGGALLMEKVVATPSKEYIWVVDESKLVEKLGAFKLPVEVVQYGAEQVFRRFERAGYKPSFREKDGQRFVTDMQNFIIDLALDVIENPIAFGQELDHVVGVVEHGLFNQMVDKVIVAGRDGVQISTSKKGK</sequence>
<evidence type="ECO:0000255" key="1">
    <source>
        <dbReference type="HAMAP-Rule" id="MF_00170"/>
    </source>
</evidence>